<accession>A4IQA2</accession>
<protein>
    <recommendedName>
        <fullName evidence="1">GTPase Der</fullName>
    </recommendedName>
    <alternativeName>
        <fullName evidence="1">GTP-binding protein EngA</fullName>
    </alternativeName>
</protein>
<organism>
    <name type="scientific">Geobacillus thermodenitrificans (strain NG80-2)</name>
    <dbReference type="NCBI Taxonomy" id="420246"/>
    <lineage>
        <taxon>Bacteria</taxon>
        <taxon>Bacillati</taxon>
        <taxon>Bacillota</taxon>
        <taxon>Bacilli</taxon>
        <taxon>Bacillales</taxon>
        <taxon>Anoxybacillaceae</taxon>
        <taxon>Geobacillus</taxon>
    </lineage>
</organism>
<proteinExistence type="inferred from homology"/>
<evidence type="ECO:0000255" key="1">
    <source>
        <dbReference type="HAMAP-Rule" id="MF_00195"/>
    </source>
</evidence>
<feature type="chain" id="PRO_1000011632" description="GTPase Der">
    <location>
        <begin position="1"/>
        <end position="436"/>
    </location>
</feature>
<feature type="domain" description="EngA-type G 1">
    <location>
        <begin position="4"/>
        <end position="167"/>
    </location>
</feature>
<feature type="domain" description="EngA-type G 2">
    <location>
        <begin position="176"/>
        <end position="351"/>
    </location>
</feature>
<feature type="domain" description="KH-like" evidence="1">
    <location>
        <begin position="352"/>
        <end position="436"/>
    </location>
</feature>
<feature type="binding site" evidence="1">
    <location>
        <begin position="10"/>
        <end position="17"/>
    </location>
    <ligand>
        <name>GTP</name>
        <dbReference type="ChEBI" id="CHEBI:37565"/>
        <label>1</label>
    </ligand>
</feature>
<feature type="binding site" evidence="1">
    <location>
        <begin position="57"/>
        <end position="61"/>
    </location>
    <ligand>
        <name>GTP</name>
        <dbReference type="ChEBI" id="CHEBI:37565"/>
        <label>1</label>
    </ligand>
</feature>
<feature type="binding site" evidence="1">
    <location>
        <begin position="119"/>
        <end position="122"/>
    </location>
    <ligand>
        <name>GTP</name>
        <dbReference type="ChEBI" id="CHEBI:37565"/>
        <label>1</label>
    </ligand>
</feature>
<feature type="binding site" evidence="1">
    <location>
        <begin position="182"/>
        <end position="189"/>
    </location>
    <ligand>
        <name>GTP</name>
        <dbReference type="ChEBI" id="CHEBI:37565"/>
        <label>2</label>
    </ligand>
</feature>
<feature type="binding site" evidence="1">
    <location>
        <begin position="229"/>
        <end position="233"/>
    </location>
    <ligand>
        <name>GTP</name>
        <dbReference type="ChEBI" id="CHEBI:37565"/>
        <label>2</label>
    </ligand>
</feature>
<feature type="binding site" evidence="1">
    <location>
        <begin position="294"/>
        <end position="297"/>
    </location>
    <ligand>
        <name>GTP</name>
        <dbReference type="ChEBI" id="CHEBI:37565"/>
        <label>2</label>
    </ligand>
</feature>
<reference key="1">
    <citation type="journal article" date="2007" name="Proc. Natl. Acad. Sci. U.S.A.">
        <title>Genome and proteome of long-chain alkane degrading Geobacillus thermodenitrificans NG80-2 isolated from a deep-subsurface oil reservoir.</title>
        <authorList>
            <person name="Feng L."/>
            <person name="Wang W."/>
            <person name="Cheng J."/>
            <person name="Ren Y."/>
            <person name="Zhao G."/>
            <person name="Gao C."/>
            <person name="Tang Y."/>
            <person name="Liu X."/>
            <person name="Han W."/>
            <person name="Peng X."/>
            <person name="Liu R."/>
            <person name="Wang L."/>
        </authorList>
    </citation>
    <scope>NUCLEOTIDE SEQUENCE [LARGE SCALE GENOMIC DNA]</scope>
    <source>
        <strain>NG80-2</strain>
    </source>
</reference>
<keyword id="KW-0342">GTP-binding</keyword>
<keyword id="KW-0547">Nucleotide-binding</keyword>
<keyword id="KW-0677">Repeat</keyword>
<keyword id="KW-0690">Ribosome biogenesis</keyword>
<comment type="function">
    <text evidence="1">GTPase that plays an essential role in the late steps of ribosome biogenesis.</text>
</comment>
<comment type="subunit">
    <text evidence="1">Associates with the 50S ribosomal subunit.</text>
</comment>
<comment type="similarity">
    <text evidence="1">Belongs to the TRAFAC class TrmE-Era-EngA-EngB-Septin-like GTPase superfamily. EngA (Der) GTPase family.</text>
</comment>
<sequence length="436" mass="48945">MANPVVAIVGRPNVGKSTIFNRIVGERISIVEDVPGVTRDRIYSSAEWLNHSFYLIDTGGIDIGDEPLLVQIRQQAEIAIDEADVIIFMTNGRDGVTAADEEVAKLLRRSNKPVVLAVNKIDNPEMRDLIYDFYALGFGEPYPISGAHGTGLGDLLDAVARHFPKDHGQEYEEDVIKFCLIGRPNVGKSSLVNAILGEERVIVSDIAGTTRDAVDTSFVREGQKYVIIDTAGMRKRGKIYESTEKYSVLRALRAIERSDVVLVVLNAEEGIIEQDKKIAGYAHEAGRGVILVVNKWDAVEKDDKTMVEFERKIRDHFPFLDYAPILFVSAKTKQRLHKLLPLVQLVSDNHAMRVQTNVLNEVIMDAVAMNPTPTHNGRRLKIYYMTQVAVKPPTFVAFVNDPELMHFSYERFLENRIRDAFGFEGTPIKIIARPRK</sequence>
<gene>
    <name evidence="1" type="primary">der</name>
    <name type="synonym">engA</name>
    <name type="ordered locus">GTNG_2154</name>
</gene>
<dbReference type="EMBL" id="CP000557">
    <property type="protein sequence ID" value="ABO67506.1"/>
    <property type="molecule type" value="Genomic_DNA"/>
</dbReference>
<dbReference type="RefSeq" id="WP_008879628.1">
    <property type="nucleotide sequence ID" value="NC_009328.1"/>
</dbReference>
<dbReference type="SMR" id="A4IQA2"/>
<dbReference type="GeneID" id="87623746"/>
<dbReference type="KEGG" id="gtn:GTNG_2154"/>
<dbReference type="eggNOG" id="COG1160">
    <property type="taxonomic scope" value="Bacteria"/>
</dbReference>
<dbReference type="HOGENOM" id="CLU_016077_6_2_9"/>
<dbReference type="Proteomes" id="UP000001578">
    <property type="component" value="Chromosome"/>
</dbReference>
<dbReference type="GO" id="GO:0005525">
    <property type="term" value="F:GTP binding"/>
    <property type="evidence" value="ECO:0007669"/>
    <property type="project" value="UniProtKB-UniRule"/>
</dbReference>
<dbReference type="GO" id="GO:0043022">
    <property type="term" value="F:ribosome binding"/>
    <property type="evidence" value="ECO:0007669"/>
    <property type="project" value="TreeGrafter"/>
</dbReference>
<dbReference type="GO" id="GO:0042254">
    <property type="term" value="P:ribosome biogenesis"/>
    <property type="evidence" value="ECO:0007669"/>
    <property type="project" value="UniProtKB-KW"/>
</dbReference>
<dbReference type="CDD" id="cd01894">
    <property type="entry name" value="EngA1"/>
    <property type="match status" value="1"/>
</dbReference>
<dbReference type="CDD" id="cd01895">
    <property type="entry name" value="EngA2"/>
    <property type="match status" value="1"/>
</dbReference>
<dbReference type="FunFam" id="3.30.300.20:FF:000004">
    <property type="entry name" value="GTPase Der"/>
    <property type="match status" value="1"/>
</dbReference>
<dbReference type="FunFam" id="3.40.50.300:FF:000040">
    <property type="entry name" value="GTPase Der"/>
    <property type="match status" value="1"/>
</dbReference>
<dbReference type="FunFam" id="3.40.50.300:FF:000057">
    <property type="entry name" value="GTPase Der"/>
    <property type="match status" value="1"/>
</dbReference>
<dbReference type="Gene3D" id="3.30.300.20">
    <property type="match status" value="1"/>
</dbReference>
<dbReference type="Gene3D" id="3.40.50.300">
    <property type="entry name" value="P-loop containing nucleotide triphosphate hydrolases"/>
    <property type="match status" value="2"/>
</dbReference>
<dbReference type="HAMAP" id="MF_00195">
    <property type="entry name" value="GTPase_Der"/>
    <property type="match status" value="1"/>
</dbReference>
<dbReference type="InterPro" id="IPR031166">
    <property type="entry name" value="G_ENGA"/>
</dbReference>
<dbReference type="InterPro" id="IPR006073">
    <property type="entry name" value="GTP-bd"/>
</dbReference>
<dbReference type="InterPro" id="IPR016484">
    <property type="entry name" value="GTPase_Der"/>
</dbReference>
<dbReference type="InterPro" id="IPR032859">
    <property type="entry name" value="KH_dom-like"/>
</dbReference>
<dbReference type="InterPro" id="IPR015946">
    <property type="entry name" value="KH_dom-like_a/b"/>
</dbReference>
<dbReference type="InterPro" id="IPR027417">
    <property type="entry name" value="P-loop_NTPase"/>
</dbReference>
<dbReference type="InterPro" id="IPR005225">
    <property type="entry name" value="Small_GTP-bd"/>
</dbReference>
<dbReference type="NCBIfam" id="TIGR03594">
    <property type="entry name" value="GTPase_EngA"/>
    <property type="match status" value="1"/>
</dbReference>
<dbReference type="NCBIfam" id="TIGR00231">
    <property type="entry name" value="small_GTP"/>
    <property type="match status" value="2"/>
</dbReference>
<dbReference type="PANTHER" id="PTHR43834">
    <property type="entry name" value="GTPASE DER"/>
    <property type="match status" value="1"/>
</dbReference>
<dbReference type="PANTHER" id="PTHR43834:SF6">
    <property type="entry name" value="GTPASE DER"/>
    <property type="match status" value="1"/>
</dbReference>
<dbReference type="Pfam" id="PF14714">
    <property type="entry name" value="KH_dom-like"/>
    <property type="match status" value="1"/>
</dbReference>
<dbReference type="Pfam" id="PF01926">
    <property type="entry name" value="MMR_HSR1"/>
    <property type="match status" value="2"/>
</dbReference>
<dbReference type="PIRSF" id="PIRSF006485">
    <property type="entry name" value="GTP-binding_EngA"/>
    <property type="match status" value="1"/>
</dbReference>
<dbReference type="SUPFAM" id="SSF52540">
    <property type="entry name" value="P-loop containing nucleoside triphosphate hydrolases"/>
    <property type="match status" value="2"/>
</dbReference>
<dbReference type="PROSITE" id="PS51712">
    <property type="entry name" value="G_ENGA"/>
    <property type="match status" value="2"/>
</dbReference>
<name>DER_GEOTN</name>